<organism>
    <name type="scientific">Mus musculus</name>
    <name type="common">Mouse</name>
    <dbReference type="NCBI Taxonomy" id="10090"/>
    <lineage>
        <taxon>Eukaryota</taxon>
        <taxon>Metazoa</taxon>
        <taxon>Chordata</taxon>
        <taxon>Craniata</taxon>
        <taxon>Vertebrata</taxon>
        <taxon>Euteleostomi</taxon>
        <taxon>Mammalia</taxon>
        <taxon>Eutheria</taxon>
        <taxon>Euarchontoglires</taxon>
        <taxon>Glires</taxon>
        <taxon>Rodentia</taxon>
        <taxon>Myomorpha</taxon>
        <taxon>Muroidea</taxon>
        <taxon>Muridae</taxon>
        <taxon>Murinae</taxon>
        <taxon>Mus</taxon>
        <taxon>Mus</taxon>
    </lineage>
</organism>
<sequence>MAEVRGVQRVLFGDWLLGEVSSGQYEGLQWLNEARTVFRVPWKHFGRRDLDEEDAQIFKAWAVARGRWPPSGVNLPPPEAEAAERRERRGWKTNFRCALHSTGRFILRQDNSGDPVDPHKVYELSRELGSTVGPATENREEVSLSNALPTQGVSPGSFLARENAGLQTPSPLLSSDAGDLLLQVLQYSHILESESGADPVPPQAPGQEQDRVYEEPYAAWQVEAVPSPRPQQPALTERSLGFLDVTIMYKGRTVLQAVVGHPRCVFLYSPMAPAVRTSEPQPVIFPSPAELPDQKQLHYTETLLQHVSPGLQLELRGPSLWALRMGKCKVYWEVGSPMGTTGPSTPPQLLERNRHTPIFDFSTFFRELEEFRARRRQGSPHYTIYLGFGQDLSAGRPKEKTLILVKLEPWVCKAYLEGVQREGVSSLDSSSLGLCLSSTNSLYEDIEHFLMDLGQWP</sequence>
<comment type="function">
    <text evidence="4 5 6 7 8 10">Key transcriptional regulator of type I interferon (IFN)-dependent immune responses and plays a critical role in the innate immune response against DNA and RNA viruses (PubMed:22095711, PubMed:27129230). Regulates the transcription of type I IFN genes (IFN-alpha and IFN-beta) and IFN-stimulated genes (ISG) by binding to an interferon-stimulated response element (ISRE) in their promoters. Can efficiently activate both the IFN-beta (IFNB) and the IFN-alpha (IFNA) genes and mediate their induction via both the virus-activated, MyD88-independent pathway and the TLR-activated, MyD88-dependent pathway. Induces transcription of ubiquitin hydrolase USP25 mRNA in response to lipopolysaccharide (LPS) or viral infection in a type I IFN-dependent manner (PubMed:27129230). Required during both the early and late phases of the IFN gene induction but is more critical for the late than for the early phase. Exists in an inactive form in the cytoplasm of uninfected cells and following viral infection, double-stranded RNA (dsRNA), or toll-like receptor (TLR) signaling, becomes phosphorylated by IKBKE and TBK1 kinases. This induces a conformational change, leading to its dimerization and nuclear localization where along with other coactivators it can activate transcription of the type I IFN and ISG genes. Can also play a role in regulating adaptive immune responses by inducing PSMB9/LMP2 expression, either directly or through induction of IRF1. Binds to the Q promoter (Qp) of EBV nuclear antigen 1 a (EBNA1) and may play a role in the regulation of EBV latency. Can activate distinct gene expression programs in macrophages and regulate the anti-tumor properties of primary macrophages.</text>
</comment>
<comment type="activity regulation">
    <text>In the absence of viral infection, maintained as a monomer in an autoinhibited state and phosphorylation disrupts this autoinhibition leading to the liberation of the DNA-binding and dimerization activities and its nuclear localization where it can activate type I IFN and ISG genes.</text>
</comment>
<comment type="subunit">
    <text evidence="2 4 8 9">Monomer. Homodimer; phosphorylation-induced. Heterodimer with IRF3. Interacts with TICAM1 and TICAM2. Interacts with MYD88 and TRAF6. Interacts with NMI; the interaction is direct and leads to the inhibition of IRF7-mediated type I IFN production (PubMed:23956435). Interacts with GBP4; preventing interaction between TRAF6 and IRF7, resulting in impaired TRAF6-mediated IRF7 ubiquitination (PubMed:22095711). Interacts with TARBP2; this interaction prevents IRF7 phosphorylation and activation (By similarity).</text>
</comment>
<comment type="interaction">
    <interactant intactId="EBI-997907">
        <id>P70434</id>
    </interactant>
    <interactant intactId="EBI-646245">
        <id>Q60680</id>
        <label>Chuk</label>
    </interactant>
    <organismsDiffer>false</organismsDiffer>
    <experiments>3</experiments>
</comment>
<comment type="interaction">
    <interactant intactId="EBI-997907">
        <id>P70434</id>
    </interactant>
    <interactant intactId="EBI-2536044">
        <id>Q8C006</id>
        <label>Trim35</label>
    </interactant>
    <organismsDiffer>false</organismsDiffer>
    <experiments>2</experiments>
</comment>
<comment type="subcellular location">
    <subcellularLocation>
        <location evidence="4">Nucleus</location>
    </subcellularLocation>
    <subcellularLocation>
        <location evidence="4">Cytoplasm</location>
    </subcellularLocation>
    <text>The phosphorylated and active form accumulates selectively in the nucleus.</text>
</comment>
<comment type="induction">
    <text evidence="10">Induced by lipopolysaccharide (LPS) (PubMed:27129230). Induced by type I interferon (IFN) and viruses (HIV-1 and SeV viruses) (PubMed:27129230).</text>
</comment>
<comment type="PTM">
    <text evidence="1">Acetylation inhibits its DNA-binding ability and activity.</text>
</comment>
<comment type="PTM">
    <text evidence="1">In response to a viral infection, phosphorylated by TBK1 and IKBKE1. Phosphorylation, and subsequent activation is inhibited by vaccinia virus protein E3. In TLR7- and TLR9-mediated signaling pathway, phosphorylated by IRAK1 (By similarity).</text>
</comment>
<comment type="PTM">
    <text evidence="2 4 8 9">TRAF6-mediated ubiquitination is required for IRF7 activation (PubMed:15361868, PubMed:22095711). TRIM35 mediates IRF7 'Lys-48'-linked polyubiquitination and subsequent proteasomal degradation (By similarity). 'Lys-48'-linked polyubiquitination and subsequent proteasomal degradation is NMI-dependent in response to Sendai virus infection (PubMed:23956435). Ubiquitinated by UBE3C, leading to its degradation (By similarity).</text>
</comment>
<comment type="PTM">
    <text evidence="1">Sumoylated by TRIM28, which inhibits its transactivation activity.</text>
</comment>
<comment type="PTM">
    <text evidence="2">'Lys-63'-linked ubiquitination by NEURL3 promotes IRF7 activation.</text>
</comment>
<comment type="similarity">
    <text evidence="3">Belongs to the IRF family.</text>
</comment>
<accession>P70434</accession>
<gene>
    <name type="primary">Irf7</name>
</gene>
<protein>
    <recommendedName>
        <fullName>Interferon regulatory factor 7</fullName>
        <shortName>IRF-7</shortName>
    </recommendedName>
</protein>
<keyword id="KW-0002">3D-structure</keyword>
<keyword id="KW-0007">Acetylation</keyword>
<keyword id="KW-0010">Activator</keyword>
<keyword id="KW-0963">Cytoplasm</keyword>
<keyword id="KW-0238">DNA-binding</keyword>
<keyword id="KW-0391">Immunity</keyword>
<keyword id="KW-0399">Innate immunity</keyword>
<keyword id="KW-1017">Isopeptide bond</keyword>
<keyword id="KW-0539">Nucleus</keyword>
<keyword id="KW-0597">Phosphoprotein</keyword>
<keyword id="KW-1185">Reference proteome</keyword>
<keyword id="KW-0804">Transcription</keyword>
<keyword id="KW-0805">Transcription regulation</keyword>
<keyword id="KW-0832">Ubl conjugation</keyword>
<name>IRF7_MOUSE</name>
<reference key="1">
    <citation type="submission" date="1996-10" db="EMBL/GenBank/DDBJ databases">
        <authorList>
            <person name="Grossman A."/>
            <person name="Nicholl J."/>
            <person name="Antonio L."/>
            <person name="Luethy R."/>
            <person name="Suggs S."/>
            <person name="Sutherland G.R."/>
            <person name="Mak T.W."/>
        </authorList>
    </citation>
    <scope>NUCLEOTIDE SEQUENCE [MRNA]</scope>
    <source>
        <strain>BALB/cJ</strain>
        <tissue>Spleen</tissue>
    </source>
</reference>
<reference key="2">
    <citation type="journal article" date="2002" name="J. Interferon Cytokine Res.">
        <title>Structure and function of IRF-7.</title>
        <authorList>
            <person name="Zhang L."/>
            <person name="Pagano J.S."/>
        </authorList>
    </citation>
    <scope>REVIEW ON FUNCTION</scope>
</reference>
<reference key="3">
    <citation type="journal article" date="2005" name="J. Biol. Chem.">
        <title>Regulatory serine residues mediate phosphorylation-dependent and phosphorylation-independent activation of interferon regulatory factor 7.</title>
        <authorList>
            <person name="Caillaud A."/>
            <person name="Hovanessian A.G."/>
            <person name="Levy D.E."/>
            <person name="Marie I.J."/>
        </authorList>
    </citation>
    <scope>FUNCTION</scope>
    <scope>PHOSPHORYLATION AT SER-425; SER-426; SER-429; SER-431; SER-437; SER-438 AND SER-441</scope>
    <scope>MUTAGENESIS OF SER-425; SER-426; LEU-427; 429-SER--SER-431; SER-437; SER-438 AND SER-441</scope>
</reference>
<reference key="4">
    <citation type="journal article" date="2004" name="Nat. Immunol.">
        <title>Interferon-alpha induction through Toll-like receptors involves a direct interaction of IRF7 with MyD88 and TRAF6.</title>
        <authorList>
            <person name="Kawai T."/>
            <person name="Sato S."/>
            <person name="Ishii K.J."/>
            <person name="Coban C."/>
            <person name="Hemmi H."/>
            <person name="Yamamoto M."/>
            <person name="Terai K."/>
            <person name="Matsuda M."/>
            <person name="Inoue J."/>
            <person name="Uematsu S."/>
            <person name="Takeuchi O."/>
            <person name="Akira S."/>
        </authorList>
    </citation>
    <scope>FUNCTION</scope>
    <scope>SUBCELLULAR LOCATION</scope>
    <scope>PHOSPHORYLATION</scope>
    <scope>UBIQUITINATION</scope>
    <scope>INTERACTION WITH MYD88 AND TRAF6</scope>
</reference>
<reference key="5">
    <citation type="journal article" date="2005" name="Nature">
        <title>IRF-7 is the master regulator of type-I interferon-dependent immune responses.</title>
        <authorList>
            <person name="Honda K."/>
            <person name="Yanai H."/>
            <person name="Negishi H."/>
            <person name="Asagiri M."/>
            <person name="Sato M."/>
            <person name="Mizutani T."/>
            <person name="Shimada N."/>
            <person name="Ohba Y."/>
            <person name="Takaoka A."/>
            <person name="Yoshida N."/>
            <person name="Taniguchi T."/>
        </authorList>
    </citation>
    <scope>FUNCTION</scope>
</reference>
<reference key="6">
    <citation type="journal article" date="2006" name="Biochem. Pharmacol.">
        <title>Distinct functions of IRF-3 and IRF-7 in IFN-alpha gene regulation and control of anti-tumor activity in primary macrophages.</title>
        <authorList>
            <person name="Solis M."/>
            <person name="Goubau D."/>
            <person name="Romieu-Mourez R."/>
            <person name="Genin P."/>
            <person name="Civas A."/>
            <person name="Hiscott J."/>
        </authorList>
    </citation>
    <scope>REVIEW ON FUNCTION</scope>
</reference>
<reference key="7">
    <citation type="journal article" date="2006" name="Immunity">
        <title>Type I interferon gene induction by the interferon regulatory factor family of transcription factors.</title>
        <authorList>
            <person name="Honda K."/>
            <person name="Takaoka A."/>
            <person name="Taniguchi T."/>
        </authorList>
    </citation>
    <scope>REVIEW ON FUNCTION</scope>
</reference>
<reference key="8">
    <citation type="journal article" date="2006" name="Immunity">
        <authorList>
            <person name="Honda K."/>
            <person name="Takaoka A."/>
            <person name="Taniguchi T."/>
        </authorList>
    </citation>
    <scope>ERRATUM OF PUBMED:16979567</scope>
</reference>
<reference key="9">
    <citation type="journal article" date="2008" name="J. Virol.">
        <title>Interferon regulatory factor IRF-7 induces the antiviral alpha interferon response and protects against lethal West Nile virus infection.</title>
        <authorList>
            <person name="Daffis S."/>
            <person name="Samuel M.A."/>
            <person name="Suthar M.S."/>
            <person name="Keller B.C."/>
            <person name="Gale M. Jr."/>
            <person name="Diamond M.S."/>
        </authorList>
    </citation>
    <scope>FUNCTION</scope>
</reference>
<reference key="10">
    <citation type="journal article" date="2010" name="Cancer Immunol. Immunother.">
        <title>Regulation of immunity and oncogenesis by the IRF transcription factor family.</title>
        <authorList>
            <person name="Savitsky D."/>
            <person name="Tamura T."/>
            <person name="Yanai H."/>
            <person name="Taniguchi T."/>
        </authorList>
    </citation>
    <scope>REVIEW ON FUNCTION</scope>
</reference>
<reference key="11">
    <citation type="journal article" date="2011" name="Genes Immun.">
        <title>IRF7: activation, regulation, modification and function.</title>
        <authorList>
            <person name="Ning S."/>
            <person name="Pagano J.S."/>
            <person name="Barber G.N."/>
        </authorList>
    </citation>
    <scope>REVIEW ON FUNCTION</scope>
</reference>
<reference key="12">
    <citation type="journal article" date="2013" name="J. Immunol.">
        <title>Negative regulation of Nmi on virus-triggered type I IFN production by targeting IRF7.</title>
        <authorList>
            <person name="Wang J."/>
            <person name="Yang B."/>
            <person name="Hu Y."/>
            <person name="Zheng Y."/>
            <person name="Zhou H."/>
            <person name="Wang Y."/>
            <person name="Ma Y."/>
            <person name="Mao K."/>
            <person name="Yang L."/>
            <person name="Lin G."/>
            <person name="Ji Y."/>
            <person name="Wu X."/>
            <person name="Sun B."/>
        </authorList>
    </citation>
    <scope>INTERACTION WITH NMI</scope>
    <scope>UBIQUITINATION</scope>
    <scope>REGION</scope>
    <scope>MUTAGENESIS OF 1-MET--GLU-237; 1-MET--VAL-132; 238-ARG--PRO-457; 238-ARG--TRP-410 AND 411-VAL--PRO-457</scope>
</reference>
<reference key="13">
    <citation type="journal article" date="2016" name="J. Biol. Chem.">
        <title>The Type I Interferon-IRF7 Axis Mediates Transcriptional Expression of Usp25 Gene.</title>
        <authorList>
            <person name="Ren Y."/>
            <person name="Zhao Y."/>
            <person name="Lin D."/>
            <person name="Xu X."/>
            <person name="Zhu Q."/>
            <person name="Yao J."/>
            <person name="Shu H.B."/>
            <person name="Zhong B."/>
        </authorList>
    </citation>
    <scope>FUNCTION</scope>
    <scope>INDUCTION</scope>
</reference>
<reference key="14">
    <citation type="journal article" date="2011" name="J. Immunol.">
        <title>Guanylate binding protein 4 negatively regulates virus-induced type I IFN and antiviral response by targeting IFN regulatory factor 7.</title>
        <authorList>
            <person name="Hu Y."/>
            <person name="Wang J."/>
            <person name="Yang B."/>
            <person name="Zheng N."/>
            <person name="Qin M."/>
            <person name="Ji Y."/>
            <person name="Lin G."/>
            <person name="Tian L."/>
            <person name="Wu X."/>
            <person name="Wu L."/>
            <person name="Sun B."/>
        </authorList>
    </citation>
    <scope>FUNCTION</scope>
    <scope>INTERACTION WITH GBP4</scope>
</reference>
<dbReference type="EMBL" id="U73037">
    <property type="protein sequence ID" value="AAB18626.1"/>
    <property type="molecule type" value="mRNA"/>
</dbReference>
<dbReference type="CCDS" id="CCDS22005.1"/>
<dbReference type="RefSeq" id="NP_058546.1">
    <property type="nucleotide sequence ID" value="NM_016850.3"/>
</dbReference>
<dbReference type="PDB" id="3QU3">
    <property type="method" value="X-ray"/>
    <property type="resolution" value="1.30 A"/>
    <property type="chains" value="A/B/C=1-134"/>
</dbReference>
<dbReference type="PDBsum" id="3QU3"/>
<dbReference type="SMR" id="P70434"/>
<dbReference type="BioGRID" id="207563">
    <property type="interactions" value="12"/>
</dbReference>
<dbReference type="DIP" id="DIP-37903N"/>
<dbReference type="FunCoup" id="P70434">
    <property type="interactions" value="1812"/>
</dbReference>
<dbReference type="IntAct" id="P70434">
    <property type="interactions" value="8"/>
</dbReference>
<dbReference type="MINT" id="P70434"/>
<dbReference type="STRING" id="10090.ENSMUSP00000026571"/>
<dbReference type="iPTMnet" id="P70434"/>
<dbReference type="PhosphoSitePlus" id="P70434"/>
<dbReference type="PaxDb" id="10090-ENSMUSP00000026571"/>
<dbReference type="ProteomicsDB" id="269505"/>
<dbReference type="Antibodypedia" id="4325">
    <property type="antibodies" value="598 antibodies from 40 providers"/>
</dbReference>
<dbReference type="DNASU" id="54123"/>
<dbReference type="Ensembl" id="ENSMUST00000026571.11">
    <property type="protein sequence ID" value="ENSMUSP00000026571.5"/>
    <property type="gene ID" value="ENSMUSG00000025498.16"/>
</dbReference>
<dbReference type="GeneID" id="54123"/>
<dbReference type="KEGG" id="mmu:54123"/>
<dbReference type="UCSC" id="uc009kkg.2">
    <property type="organism name" value="mouse"/>
</dbReference>
<dbReference type="AGR" id="MGI:1859212"/>
<dbReference type="CTD" id="3665"/>
<dbReference type="MGI" id="MGI:1859212">
    <property type="gene designation" value="Irf7"/>
</dbReference>
<dbReference type="VEuPathDB" id="HostDB:ENSMUSG00000025498"/>
<dbReference type="eggNOG" id="ENOG502R2I9">
    <property type="taxonomic scope" value="Eukaryota"/>
</dbReference>
<dbReference type="GeneTree" id="ENSGT00940000160931"/>
<dbReference type="InParanoid" id="P70434"/>
<dbReference type="OMA" id="HEIAQME"/>
<dbReference type="OrthoDB" id="9836034at2759"/>
<dbReference type="PhylomeDB" id="P70434"/>
<dbReference type="TreeFam" id="TF328512"/>
<dbReference type="Reactome" id="R-MMU-3134963">
    <property type="pathway name" value="DEx/H-box helicases activate type I IFN and inflammatory cytokines production"/>
</dbReference>
<dbReference type="Reactome" id="R-MMU-9013973">
    <property type="pathway name" value="TICAM1-dependent activation of IRF3/IRF7"/>
</dbReference>
<dbReference type="Reactome" id="R-MMU-918233">
    <property type="pathway name" value="TRAF3-dependent IRF activation pathway"/>
</dbReference>
<dbReference type="Reactome" id="R-MMU-933541">
    <property type="pathway name" value="TRAF6 mediated IRF7 activation"/>
</dbReference>
<dbReference type="Reactome" id="R-MMU-936964">
    <property type="pathway name" value="Activation of IRF3, IRF7 mediated by TBK1, IKKEpsilon (IKBKE)"/>
</dbReference>
<dbReference type="Reactome" id="R-MMU-975110">
    <property type="pathway name" value="TRAF6 mediated IRF7 activation in TLR7/8 or 9 signaling"/>
</dbReference>
<dbReference type="BioGRID-ORCS" id="54123">
    <property type="hits" value="1 hit in 83 CRISPR screens"/>
</dbReference>
<dbReference type="EvolutionaryTrace" id="P70434"/>
<dbReference type="PRO" id="PR:P70434"/>
<dbReference type="Proteomes" id="UP000000589">
    <property type="component" value="Chromosome 7"/>
</dbReference>
<dbReference type="RNAct" id="P70434">
    <property type="molecule type" value="protein"/>
</dbReference>
<dbReference type="Bgee" id="ENSMUSG00000025498">
    <property type="expression patterns" value="Expressed in small intestine Peyer's patch and 108 other cell types or tissues"/>
</dbReference>
<dbReference type="ExpressionAtlas" id="P70434">
    <property type="expression patterns" value="baseline and differential"/>
</dbReference>
<dbReference type="GO" id="GO:0000785">
    <property type="term" value="C:chromatin"/>
    <property type="evidence" value="ECO:0007669"/>
    <property type="project" value="Ensembl"/>
</dbReference>
<dbReference type="GO" id="GO:0005829">
    <property type="term" value="C:cytosol"/>
    <property type="evidence" value="ECO:0007669"/>
    <property type="project" value="Ensembl"/>
</dbReference>
<dbReference type="GO" id="GO:0005654">
    <property type="term" value="C:nucleoplasm"/>
    <property type="evidence" value="ECO:0007669"/>
    <property type="project" value="Ensembl"/>
</dbReference>
<dbReference type="GO" id="GO:0000987">
    <property type="term" value="F:cis-regulatory region sequence-specific DNA binding"/>
    <property type="evidence" value="ECO:0000314"/>
    <property type="project" value="UniProtKB"/>
</dbReference>
<dbReference type="GO" id="GO:0003677">
    <property type="term" value="F:DNA binding"/>
    <property type="evidence" value="ECO:0000250"/>
    <property type="project" value="UniProtKB"/>
</dbReference>
<dbReference type="GO" id="GO:0000981">
    <property type="term" value="F:DNA-binding transcription factor activity, RNA polymerase II-specific"/>
    <property type="evidence" value="ECO:0000314"/>
    <property type="project" value="UniProt"/>
</dbReference>
<dbReference type="GO" id="GO:0000978">
    <property type="term" value="F:RNA polymerase II cis-regulatory region sequence-specific DNA binding"/>
    <property type="evidence" value="ECO:0007669"/>
    <property type="project" value="Ensembl"/>
</dbReference>
<dbReference type="GO" id="GO:0002753">
    <property type="term" value="P:cytoplasmic pattern recognition receptor signaling pathway"/>
    <property type="evidence" value="ECO:0007669"/>
    <property type="project" value="Ensembl"/>
</dbReference>
<dbReference type="GO" id="GO:0051607">
    <property type="term" value="P:defense response to virus"/>
    <property type="evidence" value="ECO:0000315"/>
    <property type="project" value="UniProtKB"/>
</dbReference>
<dbReference type="GO" id="GO:0016064">
    <property type="term" value="P:immunoglobulin mediated immune response"/>
    <property type="evidence" value="ECO:0000315"/>
    <property type="project" value="MGI"/>
</dbReference>
<dbReference type="GO" id="GO:0045893">
    <property type="term" value="P:positive regulation of DNA-templated transcription"/>
    <property type="evidence" value="ECO:0000315"/>
    <property type="project" value="UniProtKB"/>
</dbReference>
<dbReference type="GO" id="GO:0032727">
    <property type="term" value="P:positive regulation of interferon-alpha production"/>
    <property type="evidence" value="ECO:0000304"/>
    <property type="project" value="UniProtKB"/>
</dbReference>
<dbReference type="GO" id="GO:0032728">
    <property type="term" value="P:positive regulation of interferon-beta production"/>
    <property type="evidence" value="ECO:0000304"/>
    <property type="project" value="UniProtKB"/>
</dbReference>
<dbReference type="GO" id="GO:0045944">
    <property type="term" value="P:positive regulation of transcription by RNA polymerase II"/>
    <property type="evidence" value="ECO:0000250"/>
    <property type="project" value="UniProtKB"/>
</dbReference>
<dbReference type="GO" id="GO:0032481">
    <property type="term" value="P:positive regulation of type I interferon production"/>
    <property type="evidence" value="ECO:0000314"/>
    <property type="project" value="UniProt"/>
</dbReference>
<dbReference type="GO" id="GO:0060340">
    <property type="term" value="P:positive regulation of type I interferon-mediated signaling pathway"/>
    <property type="evidence" value="ECO:0000315"/>
    <property type="project" value="MGI"/>
</dbReference>
<dbReference type="GO" id="GO:0002819">
    <property type="term" value="P:regulation of adaptive immune response"/>
    <property type="evidence" value="ECO:0000250"/>
    <property type="project" value="UniProtKB"/>
</dbReference>
<dbReference type="GO" id="GO:0010468">
    <property type="term" value="P:regulation of gene expression"/>
    <property type="evidence" value="ECO:0000316"/>
    <property type="project" value="MGI"/>
</dbReference>
<dbReference type="GO" id="GO:0045088">
    <property type="term" value="P:regulation of innate immune response"/>
    <property type="evidence" value="ECO:0000304"/>
    <property type="project" value="UniProtKB"/>
</dbReference>
<dbReference type="GO" id="GO:0034124">
    <property type="term" value="P:regulation of MyD88-dependent toll-like receptor signaling pathway"/>
    <property type="evidence" value="ECO:0000315"/>
    <property type="project" value="UniProtKB"/>
</dbReference>
<dbReference type="GO" id="GO:0034127">
    <property type="term" value="P:regulation of MyD88-independent toll-like receptor signaling pathway"/>
    <property type="evidence" value="ECO:0000315"/>
    <property type="project" value="UniProtKB"/>
</dbReference>
<dbReference type="GO" id="GO:0060337">
    <property type="term" value="P:type I interferon-mediated signaling pathway"/>
    <property type="evidence" value="ECO:0000315"/>
    <property type="project" value="UniProtKB"/>
</dbReference>
<dbReference type="CDD" id="cd00103">
    <property type="entry name" value="IRF"/>
    <property type="match status" value="1"/>
</dbReference>
<dbReference type="FunFam" id="1.10.10.10:FF:000375">
    <property type="entry name" value="Interferon regulatory factor 7"/>
    <property type="match status" value="1"/>
</dbReference>
<dbReference type="FunFam" id="2.60.200.10:FF:000007">
    <property type="entry name" value="Interferon regulatory factor 7"/>
    <property type="match status" value="1"/>
</dbReference>
<dbReference type="Gene3D" id="2.60.200.10">
    <property type="match status" value="1"/>
</dbReference>
<dbReference type="Gene3D" id="1.10.10.10">
    <property type="entry name" value="Winged helix-like DNA-binding domain superfamily/Winged helix DNA-binding domain"/>
    <property type="match status" value="1"/>
</dbReference>
<dbReference type="InterPro" id="IPR019817">
    <property type="entry name" value="Interferon_reg_fac_CS"/>
</dbReference>
<dbReference type="InterPro" id="IPR001346">
    <property type="entry name" value="Interferon_reg_fact_DNA-bd_dom"/>
</dbReference>
<dbReference type="InterPro" id="IPR019471">
    <property type="entry name" value="Interferon_reg_factor-3"/>
</dbReference>
<dbReference type="InterPro" id="IPR017855">
    <property type="entry name" value="SMAD-like_dom_sf"/>
</dbReference>
<dbReference type="InterPro" id="IPR008984">
    <property type="entry name" value="SMAD_FHA_dom_sf"/>
</dbReference>
<dbReference type="InterPro" id="IPR036388">
    <property type="entry name" value="WH-like_DNA-bd_sf"/>
</dbReference>
<dbReference type="InterPro" id="IPR036390">
    <property type="entry name" value="WH_DNA-bd_sf"/>
</dbReference>
<dbReference type="PANTHER" id="PTHR11949">
    <property type="entry name" value="INTERFERON REGULATORY FACTOR"/>
    <property type="match status" value="1"/>
</dbReference>
<dbReference type="PANTHER" id="PTHR11949:SF2">
    <property type="entry name" value="INTERFERON REGULATORY FACTOR 7"/>
    <property type="match status" value="1"/>
</dbReference>
<dbReference type="Pfam" id="PF00605">
    <property type="entry name" value="IRF"/>
    <property type="match status" value="1"/>
</dbReference>
<dbReference type="Pfam" id="PF10401">
    <property type="entry name" value="IRF-3"/>
    <property type="match status" value="1"/>
</dbReference>
<dbReference type="PRINTS" id="PR00267">
    <property type="entry name" value="INTFRNREGFCT"/>
</dbReference>
<dbReference type="SMART" id="SM00348">
    <property type="entry name" value="IRF"/>
    <property type="match status" value="1"/>
</dbReference>
<dbReference type="SMART" id="SM01243">
    <property type="entry name" value="IRF-3"/>
    <property type="match status" value="1"/>
</dbReference>
<dbReference type="SUPFAM" id="SSF49879">
    <property type="entry name" value="SMAD/FHA domain"/>
    <property type="match status" value="1"/>
</dbReference>
<dbReference type="SUPFAM" id="SSF46785">
    <property type="entry name" value="Winged helix' DNA-binding domain"/>
    <property type="match status" value="1"/>
</dbReference>
<dbReference type="PROSITE" id="PS00601">
    <property type="entry name" value="IRF_1"/>
    <property type="match status" value="1"/>
</dbReference>
<dbReference type="PROSITE" id="PS51507">
    <property type="entry name" value="IRF_2"/>
    <property type="match status" value="1"/>
</dbReference>
<feature type="chain" id="PRO_0000154563" description="Interferon regulatory factor 7">
    <location>
        <begin position="1"/>
        <end position="457"/>
    </location>
</feature>
<feature type="DNA-binding region" description="IRF tryptophan pentad repeat" evidence="3">
    <location>
        <begin position="9"/>
        <end position="126"/>
    </location>
</feature>
<feature type="region of interest" description="Necessary for the interaction with NMI" evidence="9">
    <location>
        <begin position="238"/>
        <end position="410"/>
    </location>
</feature>
<feature type="modified residue" description="N6-acetyllysine; by KAT2A and KAT2B" evidence="2">
    <location>
        <position position="92"/>
    </location>
</feature>
<feature type="modified residue" description="Phosphoserine" evidence="11">
    <location>
        <position position="425"/>
    </location>
</feature>
<feature type="modified residue" description="Phosphoserine" evidence="11">
    <location>
        <position position="426"/>
    </location>
</feature>
<feature type="modified residue" description="Phosphoserine" evidence="11">
    <location>
        <position position="429"/>
    </location>
</feature>
<feature type="modified residue" description="Phosphoserine; by TBK1 and IKKE" evidence="2">
    <location>
        <position position="431"/>
    </location>
</feature>
<feature type="modified residue" description="Phosphoserine" evidence="11">
    <location>
        <position position="437"/>
    </location>
</feature>
<feature type="modified residue" description="Phosphoserine" evidence="11">
    <location>
        <position position="438"/>
    </location>
</feature>
<feature type="modified residue" description="Phosphoserine" evidence="11">
    <location>
        <position position="441"/>
    </location>
</feature>
<feature type="cross-link" description="Glycyl lysine isopeptide (Lys-Gly) (interchain with G-Cter in ubiquitin)">
    <location>
        <position position="329"/>
    </location>
</feature>
<feature type="cross-link" description="Glycyl lysine isopeptide (Lys-Gly) (interchain with G-Cter in SUMO)" evidence="1">
    <location>
        <position position="398"/>
    </location>
</feature>
<feature type="cross-link" description="Glycyl lysine isopeptide (Lys-Gly) (interchain with G-Cter in SUMO)" evidence="1">
    <location>
        <position position="400"/>
    </location>
</feature>
<feature type="mutagenesis site" description="Strongly decreased transcriptional activation in response to viral infection; when associated with A-426." evidence="5">
    <original>S</original>
    <variation>A</variation>
    <location>
        <position position="425"/>
    </location>
</feature>
<feature type="mutagenesis site" description="Strongly decreased transcriptional activation in response to viral infection; when associated with D-426." evidence="5">
    <original>S</original>
    <variation>D</variation>
    <location>
        <position position="425"/>
    </location>
</feature>
<feature type="mutagenesis site" description="Strongly decreased transcriptional activation in response to viral infection; when associated with A-425." evidence="5">
    <original>S</original>
    <variation>A</variation>
    <location>
        <position position="426"/>
    </location>
</feature>
<feature type="mutagenesis site" description="Strongly decreased transcriptional activation in response to viral infection; when associated with D-425." evidence="5">
    <original>S</original>
    <variation>D</variation>
    <location>
        <position position="426"/>
    </location>
</feature>
<feature type="mutagenesis site" description="Strongly decreased transcriptional activation in response to viral infection." evidence="5">
    <original>L</original>
    <variation>A</variation>
    <location>
        <position position="427"/>
    </location>
</feature>
<feature type="mutagenesis site" description="No effect on transcriptional activation in response to viral infection." evidence="5">
    <original>L</original>
    <variation>D</variation>
    <location>
        <position position="427"/>
    </location>
</feature>
<feature type="mutagenesis site" description="Almost no effect on transcriptional activation in response to viral infection." evidence="5">
    <original>SSS</original>
    <variation>AAA</variation>
    <location>
        <begin position="429"/>
        <end position="431"/>
    </location>
</feature>
<feature type="mutagenesis site" description="Strongly increased transcriptional activation in response to viral infection." evidence="5">
    <original>SSS</original>
    <variation>DDD</variation>
    <location>
        <begin position="429"/>
        <end position="431"/>
    </location>
</feature>
<feature type="mutagenesis site" description="Almost complete loss of transcriptional activation; when associated with A-438." evidence="5">
    <original>S</original>
    <variation>A</variation>
    <location>
        <position position="437"/>
    </location>
</feature>
<feature type="mutagenesis site" description="Increased transcriptional activation; when associated with D-438." evidence="5">
    <original>S</original>
    <variation>D</variation>
    <location>
        <position position="437"/>
    </location>
</feature>
<feature type="mutagenesis site" description="Almost complete loss of transcriptional activation; when associated with A-437." evidence="5">
    <original>S</original>
    <variation>A</variation>
    <location>
        <position position="438"/>
    </location>
</feature>
<feature type="mutagenesis site" description="Increased transcriptional activation; when associated with D-437." evidence="5">
    <original>S</original>
    <variation>D</variation>
    <location>
        <position position="438"/>
    </location>
</feature>
<feature type="mutagenesis site" description="Almost no effect on transcriptional activation in response to viral infection." evidence="5">
    <original>S</original>
    <variation>A</variation>
    <location>
        <position position="441"/>
    </location>
</feature>
<feature type="helix" evidence="12">
    <location>
        <begin position="12"/>
        <end position="22"/>
    </location>
</feature>
<feature type="strand" evidence="12">
    <location>
        <begin position="29"/>
        <end position="32"/>
    </location>
</feature>
<feature type="strand" evidence="12">
    <location>
        <begin position="37"/>
        <end position="41"/>
    </location>
</feature>
<feature type="helix" evidence="12">
    <location>
        <begin position="52"/>
        <end position="55"/>
    </location>
</feature>
<feature type="helix" evidence="12">
    <location>
        <begin position="56"/>
        <end position="64"/>
    </location>
</feature>
<feature type="helix" evidence="12">
    <location>
        <begin position="77"/>
        <end position="85"/>
    </location>
</feature>
<feature type="helix" evidence="12">
    <location>
        <begin position="88"/>
        <end position="100"/>
    </location>
</feature>
<feature type="strand" evidence="12">
    <location>
        <begin position="105"/>
        <end position="111"/>
    </location>
</feature>
<feature type="strand" evidence="12">
    <location>
        <begin position="119"/>
        <end position="124"/>
    </location>
</feature>
<proteinExistence type="evidence at protein level"/>
<evidence type="ECO:0000250" key="1"/>
<evidence type="ECO:0000250" key="2">
    <source>
        <dbReference type="UniProtKB" id="Q92985"/>
    </source>
</evidence>
<evidence type="ECO:0000255" key="3">
    <source>
        <dbReference type="PROSITE-ProRule" id="PRU00840"/>
    </source>
</evidence>
<evidence type="ECO:0000269" key="4">
    <source>
    </source>
</evidence>
<evidence type="ECO:0000269" key="5">
    <source>
    </source>
</evidence>
<evidence type="ECO:0000269" key="6">
    <source>
    </source>
</evidence>
<evidence type="ECO:0000269" key="7">
    <source>
    </source>
</evidence>
<evidence type="ECO:0000269" key="8">
    <source>
    </source>
</evidence>
<evidence type="ECO:0000269" key="9">
    <source>
    </source>
</evidence>
<evidence type="ECO:0000269" key="10">
    <source>
    </source>
</evidence>
<evidence type="ECO:0000305" key="11">
    <source>
    </source>
</evidence>
<evidence type="ECO:0007829" key="12">
    <source>
        <dbReference type="PDB" id="3QU3"/>
    </source>
</evidence>